<evidence type="ECO:0000250" key="1"/>
<evidence type="ECO:0000255" key="2">
    <source>
        <dbReference type="HAMAP-Rule" id="MF_00118"/>
    </source>
</evidence>
<dbReference type="EC" id="3.6.5.3" evidence="2"/>
<dbReference type="EMBL" id="AE003852">
    <property type="protein sequence ID" value="AAF93494.1"/>
    <property type="molecule type" value="Genomic_DNA"/>
</dbReference>
<dbReference type="PIR" id="G82337">
    <property type="entry name" value="G82337"/>
</dbReference>
<dbReference type="RefSeq" id="NP_229975.1">
    <property type="nucleotide sequence ID" value="NC_002505.1"/>
</dbReference>
<dbReference type="SMR" id="Q9KV37"/>
<dbReference type="STRING" id="243277.VC_0321"/>
<dbReference type="DNASU" id="2615087"/>
<dbReference type="EnsemblBacteria" id="AAF93494">
    <property type="protein sequence ID" value="AAF93494"/>
    <property type="gene ID" value="VC_0321"/>
</dbReference>
<dbReference type="KEGG" id="vch:VC_0321"/>
<dbReference type="PATRIC" id="fig|243277.26.peg.298"/>
<dbReference type="eggNOG" id="COG0050">
    <property type="taxonomic scope" value="Bacteria"/>
</dbReference>
<dbReference type="HOGENOM" id="CLU_007265_0_0_6"/>
<dbReference type="Proteomes" id="UP000000584">
    <property type="component" value="Chromosome 1"/>
</dbReference>
<dbReference type="GO" id="GO:0005737">
    <property type="term" value="C:cytoplasm"/>
    <property type="evidence" value="ECO:0007669"/>
    <property type="project" value="UniProtKB-SubCell"/>
</dbReference>
<dbReference type="GO" id="GO:0005525">
    <property type="term" value="F:GTP binding"/>
    <property type="evidence" value="ECO:0007669"/>
    <property type="project" value="UniProtKB-UniRule"/>
</dbReference>
<dbReference type="GO" id="GO:0003924">
    <property type="term" value="F:GTPase activity"/>
    <property type="evidence" value="ECO:0007669"/>
    <property type="project" value="InterPro"/>
</dbReference>
<dbReference type="GO" id="GO:0097216">
    <property type="term" value="F:guanosine tetraphosphate binding"/>
    <property type="evidence" value="ECO:0007669"/>
    <property type="project" value="UniProtKB-ARBA"/>
</dbReference>
<dbReference type="GO" id="GO:0003746">
    <property type="term" value="F:translation elongation factor activity"/>
    <property type="evidence" value="ECO:0000318"/>
    <property type="project" value="GO_Central"/>
</dbReference>
<dbReference type="GO" id="GO:0006414">
    <property type="term" value="P:translational elongation"/>
    <property type="evidence" value="ECO:0000318"/>
    <property type="project" value="GO_Central"/>
</dbReference>
<dbReference type="CDD" id="cd01884">
    <property type="entry name" value="EF_Tu"/>
    <property type="match status" value="1"/>
</dbReference>
<dbReference type="CDD" id="cd03697">
    <property type="entry name" value="EFTU_II"/>
    <property type="match status" value="1"/>
</dbReference>
<dbReference type="CDD" id="cd03707">
    <property type="entry name" value="EFTU_III"/>
    <property type="match status" value="1"/>
</dbReference>
<dbReference type="FunFam" id="2.40.30.10:FF:000001">
    <property type="entry name" value="Elongation factor Tu"/>
    <property type="match status" value="1"/>
</dbReference>
<dbReference type="FunFam" id="3.40.50.300:FF:000003">
    <property type="entry name" value="Elongation factor Tu"/>
    <property type="match status" value="1"/>
</dbReference>
<dbReference type="Gene3D" id="3.40.50.300">
    <property type="entry name" value="P-loop containing nucleotide triphosphate hydrolases"/>
    <property type="match status" value="1"/>
</dbReference>
<dbReference type="Gene3D" id="2.40.30.10">
    <property type="entry name" value="Translation factors"/>
    <property type="match status" value="2"/>
</dbReference>
<dbReference type="HAMAP" id="MF_00118_B">
    <property type="entry name" value="EF_Tu_B"/>
    <property type="match status" value="1"/>
</dbReference>
<dbReference type="InterPro" id="IPR041709">
    <property type="entry name" value="EF-Tu_GTP-bd"/>
</dbReference>
<dbReference type="InterPro" id="IPR050055">
    <property type="entry name" value="EF-Tu_GTPase"/>
</dbReference>
<dbReference type="InterPro" id="IPR004161">
    <property type="entry name" value="EFTu-like_2"/>
</dbReference>
<dbReference type="InterPro" id="IPR033720">
    <property type="entry name" value="EFTU_2"/>
</dbReference>
<dbReference type="InterPro" id="IPR031157">
    <property type="entry name" value="G_TR_CS"/>
</dbReference>
<dbReference type="InterPro" id="IPR027417">
    <property type="entry name" value="P-loop_NTPase"/>
</dbReference>
<dbReference type="InterPro" id="IPR005225">
    <property type="entry name" value="Small_GTP-bd"/>
</dbReference>
<dbReference type="InterPro" id="IPR000795">
    <property type="entry name" value="T_Tr_GTP-bd_dom"/>
</dbReference>
<dbReference type="InterPro" id="IPR009000">
    <property type="entry name" value="Transl_B-barrel_sf"/>
</dbReference>
<dbReference type="InterPro" id="IPR009001">
    <property type="entry name" value="Transl_elong_EF1A/Init_IF2_C"/>
</dbReference>
<dbReference type="InterPro" id="IPR004541">
    <property type="entry name" value="Transl_elong_EFTu/EF1A_bac/org"/>
</dbReference>
<dbReference type="InterPro" id="IPR004160">
    <property type="entry name" value="Transl_elong_EFTu/EF1A_C"/>
</dbReference>
<dbReference type="NCBIfam" id="TIGR00485">
    <property type="entry name" value="EF-Tu"/>
    <property type="match status" value="1"/>
</dbReference>
<dbReference type="NCBIfam" id="NF000766">
    <property type="entry name" value="PRK00049.1"/>
    <property type="match status" value="1"/>
</dbReference>
<dbReference type="NCBIfam" id="NF009372">
    <property type="entry name" value="PRK12735.1"/>
    <property type="match status" value="1"/>
</dbReference>
<dbReference type="NCBIfam" id="NF009373">
    <property type="entry name" value="PRK12736.1"/>
    <property type="match status" value="1"/>
</dbReference>
<dbReference type="NCBIfam" id="TIGR00231">
    <property type="entry name" value="small_GTP"/>
    <property type="match status" value="1"/>
</dbReference>
<dbReference type="PANTHER" id="PTHR43721:SF22">
    <property type="entry name" value="ELONGATION FACTOR TU, MITOCHONDRIAL"/>
    <property type="match status" value="1"/>
</dbReference>
<dbReference type="PANTHER" id="PTHR43721">
    <property type="entry name" value="ELONGATION FACTOR TU-RELATED"/>
    <property type="match status" value="1"/>
</dbReference>
<dbReference type="Pfam" id="PF00009">
    <property type="entry name" value="GTP_EFTU"/>
    <property type="match status" value="1"/>
</dbReference>
<dbReference type="Pfam" id="PF03144">
    <property type="entry name" value="GTP_EFTU_D2"/>
    <property type="match status" value="1"/>
</dbReference>
<dbReference type="Pfam" id="PF03143">
    <property type="entry name" value="GTP_EFTU_D3"/>
    <property type="match status" value="1"/>
</dbReference>
<dbReference type="PRINTS" id="PR00315">
    <property type="entry name" value="ELONGATNFCT"/>
</dbReference>
<dbReference type="SUPFAM" id="SSF50465">
    <property type="entry name" value="EF-Tu/eEF-1alpha/eIF2-gamma C-terminal domain"/>
    <property type="match status" value="1"/>
</dbReference>
<dbReference type="SUPFAM" id="SSF52540">
    <property type="entry name" value="P-loop containing nucleoside triphosphate hydrolases"/>
    <property type="match status" value="1"/>
</dbReference>
<dbReference type="SUPFAM" id="SSF50447">
    <property type="entry name" value="Translation proteins"/>
    <property type="match status" value="1"/>
</dbReference>
<dbReference type="PROSITE" id="PS00301">
    <property type="entry name" value="G_TR_1"/>
    <property type="match status" value="1"/>
</dbReference>
<dbReference type="PROSITE" id="PS51722">
    <property type="entry name" value="G_TR_2"/>
    <property type="match status" value="1"/>
</dbReference>
<gene>
    <name evidence="2" type="primary">tufA</name>
    <name type="ordered locus">VC_0321</name>
</gene>
<keyword id="KW-0963">Cytoplasm</keyword>
<keyword id="KW-0251">Elongation factor</keyword>
<keyword id="KW-0342">GTP-binding</keyword>
<keyword id="KW-0378">Hydrolase</keyword>
<keyword id="KW-0460">Magnesium</keyword>
<keyword id="KW-0479">Metal-binding</keyword>
<keyword id="KW-0547">Nucleotide-binding</keyword>
<keyword id="KW-0648">Protein biosynthesis</keyword>
<keyword id="KW-1185">Reference proteome</keyword>
<name>EFTU1_VIBCH</name>
<sequence>MSKEKFERTKPHVNVGTIGHVDHGKTTLTAAICTVLAKVYGGKARDFASIDNAPEERERGITINTSHVEYDTPNRHYAHVDCPGHADYVKNMITGAAQMDGGILVVAATDGRMPQTREHILLGRQVGIPYIIVFMNKCDMVDDEELLELVEMEVRELLSEYDFPGDDLPVIQGSALGALNGEAQWEAKIVELAEALDTYIPEPERAVDMAFLMPIEDVFSIQGRGTVVTGRIERGILKVGDEVAIVGIKETVKTTCTGVEMFRKLLDEGRAGENVGALLRGTKREEVERGQVLAKPGSITPHTKFESEVYVLSKDEGGRHTPFFKGYRPQFYFRTTDVTGSIELPEGVEMVMPGDNVKMVVDLIAPIAMDEGLRFAIREGGRTVGAGVVAKIIA</sequence>
<reference key="1">
    <citation type="journal article" date="2000" name="Nature">
        <title>DNA sequence of both chromosomes of the cholera pathogen Vibrio cholerae.</title>
        <authorList>
            <person name="Heidelberg J.F."/>
            <person name="Eisen J.A."/>
            <person name="Nelson W.C."/>
            <person name="Clayton R.A."/>
            <person name="Gwinn M.L."/>
            <person name="Dodson R.J."/>
            <person name="Haft D.H."/>
            <person name="Hickey E.K."/>
            <person name="Peterson J.D."/>
            <person name="Umayam L.A."/>
            <person name="Gill S.R."/>
            <person name="Nelson K.E."/>
            <person name="Read T.D."/>
            <person name="Tettelin H."/>
            <person name="Richardson D.L."/>
            <person name="Ermolaeva M.D."/>
            <person name="Vamathevan J.J."/>
            <person name="Bass S."/>
            <person name="Qin H."/>
            <person name="Dragoi I."/>
            <person name="Sellers P."/>
            <person name="McDonald L.A."/>
            <person name="Utterback T.R."/>
            <person name="Fleischmann R.D."/>
            <person name="Nierman W.C."/>
            <person name="White O."/>
            <person name="Salzberg S.L."/>
            <person name="Smith H.O."/>
            <person name="Colwell R.R."/>
            <person name="Mekalanos J.J."/>
            <person name="Venter J.C."/>
            <person name="Fraser C.M."/>
        </authorList>
    </citation>
    <scope>NUCLEOTIDE SEQUENCE [LARGE SCALE GENOMIC DNA]</scope>
    <source>
        <strain>ATCC 39315 / El Tor Inaba N16961</strain>
    </source>
</reference>
<comment type="function">
    <text evidence="2">GTP hydrolase that promotes the GTP-dependent binding of aminoacyl-tRNA to the A-site of ribosomes during protein biosynthesis.</text>
</comment>
<comment type="catalytic activity">
    <reaction evidence="2">
        <text>GTP + H2O = GDP + phosphate + H(+)</text>
        <dbReference type="Rhea" id="RHEA:19669"/>
        <dbReference type="ChEBI" id="CHEBI:15377"/>
        <dbReference type="ChEBI" id="CHEBI:15378"/>
        <dbReference type="ChEBI" id="CHEBI:37565"/>
        <dbReference type="ChEBI" id="CHEBI:43474"/>
        <dbReference type="ChEBI" id="CHEBI:58189"/>
        <dbReference type="EC" id="3.6.5.3"/>
    </reaction>
    <physiologicalReaction direction="left-to-right" evidence="2">
        <dbReference type="Rhea" id="RHEA:19670"/>
    </physiologicalReaction>
</comment>
<comment type="subunit">
    <text evidence="2">Monomer.</text>
</comment>
<comment type="subcellular location">
    <subcellularLocation>
        <location evidence="2">Cytoplasm</location>
    </subcellularLocation>
</comment>
<comment type="similarity">
    <text evidence="2">Belongs to the TRAFAC class translation factor GTPase superfamily. Classic translation factor GTPase family. EF-Tu/EF-1A subfamily.</text>
</comment>
<protein>
    <recommendedName>
        <fullName evidence="2">Elongation factor Tu-A</fullName>
        <shortName evidence="2">EF-Tu-A</shortName>
        <ecNumber evidence="2">3.6.5.3</ecNumber>
    </recommendedName>
</protein>
<proteinExistence type="inferred from homology"/>
<organism>
    <name type="scientific">Vibrio cholerae serotype O1 (strain ATCC 39315 / El Tor Inaba N16961)</name>
    <dbReference type="NCBI Taxonomy" id="243277"/>
    <lineage>
        <taxon>Bacteria</taxon>
        <taxon>Pseudomonadati</taxon>
        <taxon>Pseudomonadota</taxon>
        <taxon>Gammaproteobacteria</taxon>
        <taxon>Vibrionales</taxon>
        <taxon>Vibrionaceae</taxon>
        <taxon>Vibrio</taxon>
    </lineage>
</organism>
<accession>Q9KV37</accession>
<feature type="chain" id="PRO_0000091431" description="Elongation factor Tu-A">
    <location>
        <begin position="1"/>
        <end position="394"/>
    </location>
</feature>
<feature type="domain" description="tr-type G">
    <location>
        <begin position="10"/>
        <end position="204"/>
    </location>
</feature>
<feature type="region of interest" description="G1" evidence="1">
    <location>
        <begin position="19"/>
        <end position="26"/>
    </location>
</feature>
<feature type="region of interest" description="G2" evidence="1">
    <location>
        <begin position="60"/>
        <end position="64"/>
    </location>
</feature>
<feature type="region of interest" description="G3" evidence="1">
    <location>
        <begin position="81"/>
        <end position="84"/>
    </location>
</feature>
<feature type="region of interest" description="G4" evidence="1">
    <location>
        <begin position="136"/>
        <end position="139"/>
    </location>
</feature>
<feature type="region of interest" description="G5" evidence="1">
    <location>
        <begin position="174"/>
        <end position="176"/>
    </location>
</feature>
<feature type="binding site" evidence="2">
    <location>
        <begin position="19"/>
        <end position="26"/>
    </location>
    <ligand>
        <name>GTP</name>
        <dbReference type="ChEBI" id="CHEBI:37565"/>
    </ligand>
</feature>
<feature type="binding site" evidence="2">
    <location>
        <position position="26"/>
    </location>
    <ligand>
        <name>Mg(2+)</name>
        <dbReference type="ChEBI" id="CHEBI:18420"/>
    </ligand>
</feature>
<feature type="binding site" evidence="2">
    <location>
        <begin position="81"/>
        <end position="85"/>
    </location>
    <ligand>
        <name>GTP</name>
        <dbReference type="ChEBI" id="CHEBI:37565"/>
    </ligand>
</feature>
<feature type="binding site" evidence="2">
    <location>
        <begin position="136"/>
        <end position="139"/>
    </location>
    <ligand>
        <name>GTP</name>
        <dbReference type="ChEBI" id="CHEBI:37565"/>
    </ligand>
</feature>